<comment type="catalytic activity">
    <reaction evidence="1">
        <text>tRNA(Phe) + L-phenylalanine + ATP = L-phenylalanyl-tRNA(Phe) + AMP + diphosphate + H(+)</text>
        <dbReference type="Rhea" id="RHEA:19413"/>
        <dbReference type="Rhea" id="RHEA-COMP:9668"/>
        <dbReference type="Rhea" id="RHEA-COMP:9699"/>
        <dbReference type="ChEBI" id="CHEBI:15378"/>
        <dbReference type="ChEBI" id="CHEBI:30616"/>
        <dbReference type="ChEBI" id="CHEBI:33019"/>
        <dbReference type="ChEBI" id="CHEBI:58095"/>
        <dbReference type="ChEBI" id="CHEBI:78442"/>
        <dbReference type="ChEBI" id="CHEBI:78531"/>
        <dbReference type="ChEBI" id="CHEBI:456215"/>
        <dbReference type="EC" id="6.1.1.20"/>
    </reaction>
</comment>
<comment type="cofactor">
    <cofactor evidence="1">
        <name>Mg(2+)</name>
        <dbReference type="ChEBI" id="CHEBI:18420"/>
    </cofactor>
</comment>
<comment type="subunit">
    <text evidence="1">Tetramer of two alpha and two beta subunits.</text>
</comment>
<comment type="subcellular location">
    <subcellularLocation>
        <location evidence="1">Cytoplasm</location>
    </subcellularLocation>
</comment>
<comment type="similarity">
    <text evidence="1">Belongs to the phenylalanyl-tRNA synthetase beta subunit family. Type 2 subfamily.</text>
</comment>
<protein>
    <recommendedName>
        <fullName evidence="1">Phenylalanine--tRNA ligase beta subunit</fullName>
        <ecNumber evidence="1">6.1.1.20</ecNumber>
    </recommendedName>
    <alternativeName>
        <fullName evidence="1">Phenylalanyl-tRNA synthetase beta subunit</fullName>
        <shortName evidence="1">PheRS</shortName>
    </alternativeName>
</protein>
<sequence>MPTIVSYKWTLINNLKISDNQLEELLFKLKSEVKPIDADHVEIEVNNDRPDLFFPYGIIRAAKGILGKELGEPKYDIKQSVYSFEVKEVKSRPYAVAGIVKDIKLDDESLRELIQFQEKLHITVGRKRKKVAIGIHDLDKITSTKIYYKPLPLDYKFIPLNQSKLMTIKEVIEQTPQGREYGNISIYDGLSPAIVEENGDVLSIPPIINSDKTRIDEKTRNIFIDVTGTSFEAVSSTLDILVTDLAEMGGKIELLNFISPSKFEFSPLLRRYTVSVSANYISKNLGINLSLNEIEKYLRMARFDTKVLNDVVEVTVPPYRVDILSQIDLVEEIAMTIGYDKLSPKDYTIKATGKLSAETELIRTLRDLSIGAGFSEIFTFILSNDKRLRNEYVSIVNPVTVEYNAVRNSLIPTLLNFLKYNQHAIMPVYVFEIGDVVIKDKRTDTGYKNSLRAVYGIMNSKVNYEDLQSRVHQILMSLDIEPTYKTYLDDMFIPGRGAKIIDTSKSVEIGVIGEINPVLLEELEIEFPVVISEIYLDSLVKR</sequence>
<evidence type="ECO:0000255" key="1">
    <source>
        <dbReference type="HAMAP-Rule" id="MF_00284"/>
    </source>
</evidence>
<organism>
    <name type="scientific">Sulfolobus acidocaldarius (strain ATCC 33909 / DSM 639 / JCM 8929 / NBRC 15157 / NCIMB 11770)</name>
    <dbReference type="NCBI Taxonomy" id="330779"/>
    <lineage>
        <taxon>Archaea</taxon>
        <taxon>Thermoproteota</taxon>
        <taxon>Thermoprotei</taxon>
        <taxon>Sulfolobales</taxon>
        <taxon>Sulfolobaceae</taxon>
        <taxon>Sulfolobus</taxon>
    </lineage>
</organism>
<proteinExistence type="inferred from homology"/>
<keyword id="KW-0030">Aminoacyl-tRNA synthetase</keyword>
<keyword id="KW-0067">ATP-binding</keyword>
<keyword id="KW-0963">Cytoplasm</keyword>
<keyword id="KW-0436">Ligase</keyword>
<keyword id="KW-0460">Magnesium</keyword>
<keyword id="KW-0479">Metal-binding</keyword>
<keyword id="KW-0547">Nucleotide-binding</keyword>
<keyword id="KW-0648">Protein biosynthesis</keyword>
<keyword id="KW-1185">Reference proteome</keyword>
<accession>Q4J8Q0</accession>
<reference key="1">
    <citation type="journal article" date="2005" name="J. Bacteriol.">
        <title>The genome of Sulfolobus acidocaldarius, a model organism of the Crenarchaeota.</title>
        <authorList>
            <person name="Chen L."/>
            <person name="Bruegger K."/>
            <person name="Skovgaard M."/>
            <person name="Redder P."/>
            <person name="She Q."/>
            <person name="Torarinsson E."/>
            <person name="Greve B."/>
            <person name="Awayez M."/>
            <person name="Zibat A."/>
            <person name="Klenk H.-P."/>
            <person name="Garrett R.A."/>
        </authorList>
    </citation>
    <scope>NUCLEOTIDE SEQUENCE [LARGE SCALE GENOMIC DNA]</scope>
    <source>
        <strain>ATCC 33909 / DSM 639 / JCM 8929 / NBRC 15157 / NCIMB 11770</strain>
    </source>
</reference>
<dbReference type="EC" id="6.1.1.20" evidence="1"/>
<dbReference type="EMBL" id="CP000077">
    <property type="protein sequence ID" value="AAY80830.1"/>
    <property type="molecule type" value="Genomic_DNA"/>
</dbReference>
<dbReference type="RefSeq" id="WP_011278332.1">
    <property type="nucleotide sequence ID" value="NC_007181.1"/>
</dbReference>
<dbReference type="SMR" id="Q4J8Q0"/>
<dbReference type="STRING" id="330779.Saci_1510"/>
<dbReference type="GeneID" id="14552008"/>
<dbReference type="GeneID" id="78441854"/>
<dbReference type="KEGG" id="sai:Saci_1510"/>
<dbReference type="PATRIC" id="fig|330779.12.peg.1455"/>
<dbReference type="eggNOG" id="arCOG00412">
    <property type="taxonomic scope" value="Archaea"/>
</dbReference>
<dbReference type="HOGENOM" id="CLU_020279_3_0_2"/>
<dbReference type="Proteomes" id="UP000001018">
    <property type="component" value="Chromosome"/>
</dbReference>
<dbReference type="GO" id="GO:0009328">
    <property type="term" value="C:phenylalanine-tRNA ligase complex"/>
    <property type="evidence" value="ECO:0007669"/>
    <property type="project" value="TreeGrafter"/>
</dbReference>
<dbReference type="GO" id="GO:0005524">
    <property type="term" value="F:ATP binding"/>
    <property type="evidence" value="ECO:0007669"/>
    <property type="project" value="UniProtKB-UniRule"/>
</dbReference>
<dbReference type="GO" id="GO:0000287">
    <property type="term" value="F:magnesium ion binding"/>
    <property type="evidence" value="ECO:0007669"/>
    <property type="project" value="InterPro"/>
</dbReference>
<dbReference type="GO" id="GO:0004826">
    <property type="term" value="F:phenylalanine-tRNA ligase activity"/>
    <property type="evidence" value="ECO:0007669"/>
    <property type="project" value="UniProtKB-UniRule"/>
</dbReference>
<dbReference type="GO" id="GO:0003723">
    <property type="term" value="F:RNA binding"/>
    <property type="evidence" value="ECO:0007669"/>
    <property type="project" value="InterPro"/>
</dbReference>
<dbReference type="GO" id="GO:0006432">
    <property type="term" value="P:phenylalanyl-tRNA aminoacylation"/>
    <property type="evidence" value="ECO:0007669"/>
    <property type="project" value="UniProtKB-UniRule"/>
</dbReference>
<dbReference type="CDD" id="cd00769">
    <property type="entry name" value="PheRS_beta_core"/>
    <property type="match status" value="1"/>
</dbReference>
<dbReference type="FunFam" id="3.50.40.10:FF:000003">
    <property type="entry name" value="Phenylalanine--tRNA ligase beta subunit"/>
    <property type="match status" value="1"/>
</dbReference>
<dbReference type="Gene3D" id="3.30.56.10">
    <property type="match status" value="2"/>
</dbReference>
<dbReference type="Gene3D" id="3.30.930.10">
    <property type="entry name" value="Bira Bifunctional Protein, Domain 2"/>
    <property type="match status" value="1"/>
</dbReference>
<dbReference type="Gene3D" id="3.50.40.10">
    <property type="entry name" value="Phenylalanyl-trna Synthetase, Chain B, domain 3"/>
    <property type="match status" value="1"/>
</dbReference>
<dbReference type="HAMAP" id="MF_00284">
    <property type="entry name" value="Phe_tRNA_synth_beta2"/>
    <property type="match status" value="1"/>
</dbReference>
<dbReference type="InterPro" id="IPR045864">
    <property type="entry name" value="aa-tRNA-synth_II/BPL/LPL"/>
</dbReference>
<dbReference type="InterPro" id="IPR005146">
    <property type="entry name" value="B3/B4_tRNA-bd"/>
</dbReference>
<dbReference type="InterPro" id="IPR009061">
    <property type="entry name" value="DNA-bd_dom_put_sf"/>
</dbReference>
<dbReference type="InterPro" id="IPR045060">
    <property type="entry name" value="Phe-tRNA-ligase_IIc_bsu"/>
</dbReference>
<dbReference type="InterPro" id="IPR004531">
    <property type="entry name" value="Phe-tRNA-synth_IIc_bsu_arc_euk"/>
</dbReference>
<dbReference type="InterPro" id="IPR020825">
    <property type="entry name" value="Phe-tRNA_synthase-like_B3/B4"/>
</dbReference>
<dbReference type="InterPro" id="IPR022918">
    <property type="entry name" value="Phe_tRNA_ligase_beta2_arc"/>
</dbReference>
<dbReference type="InterPro" id="IPR041616">
    <property type="entry name" value="PheRS_beta_core"/>
</dbReference>
<dbReference type="InterPro" id="IPR005147">
    <property type="entry name" value="tRNA_synthase_B5-dom"/>
</dbReference>
<dbReference type="NCBIfam" id="TIGR00471">
    <property type="entry name" value="pheT_arch"/>
    <property type="match status" value="1"/>
</dbReference>
<dbReference type="PANTHER" id="PTHR10947:SF0">
    <property type="entry name" value="PHENYLALANINE--TRNA LIGASE BETA SUBUNIT"/>
    <property type="match status" value="1"/>
</dbReference>
<dbReference type="PANTHER" id="PTHR10947">
    <property type="entry name" value="PHENYLALANYL-TRNA SYNTHETASE BETA CHAIN AND LEUCINE-RICH REPEAT-CONTAINING PROTEIN 47"/>
    <property type="match status" value="1"/>
</dbReference>
<dbReference type="Pfam" id="PF03483">
    <property type="entry name" value="B3_4"/>
    <property type="match status" value="1"/>
</dbReference>
<dbReference type="Pfam" id="PF03484">
    <property type="entry name" value="B5"/>
    <property type="match status" value="1"/>
</dbReference>
<dbReference type="Pfam" id="PF17759">
    <property type="entry name" value="tRNA_synthFbeta"/>
    <property type="match status" value="1"/>
</dbReference>
<dbReference type="SMART" id="SM00873">
    <property type="entry name" value="B3_4"/>
    <property type="match status" value="1"/>
</dbReference>
<dbReference type="SMART" id="SM00874">
    <property type="entry name" value="B5"/>
    <property type="match status" value="1"/>
</dbReference>
<dbReference type="SUPFAM" id="SSF55681">
    <property type="entry name" value="Class II aaRS and biotin synthetases"/>
    <property type="match status" value="1"/>
</dbReference>
<dbReference type="SUPFAM" id="SSF46955">
    <property type="entry name" value="Putative DNA-binding domain"/>
    <property type="match status" value="2"/>
</dbReference>
<dbReference type="PROSITE" id="PS51483">
    <property type="entry name" value="B5"/>
    <property type="match status" value="1"/>
</dbReference>
<gene>
    <name evidence="1" type="primary">pheT</name>
    <name type="ordered locus">Saci_1510</name>
</gene>
<name>SYFB_SULAC</name>
<feature type="chain" id="PRO_0000127011" description="Phenylalanine--tRNA ligase beta subunit">
    <location>
        <begin position="1"/>
        <end position="542"/>
    </location>
</feature>
<feature type="domain" description="B5" evidence="1">
    <location>
        <begin position="269"/>
        <end position="344"/>
    </location>
</feature>
<feature type="binding site" evidence="1">
    <location>
        <position position="322"/>
    </location>
    <ligand>
        <name>Mg(2+)</name>
        <dbReference type="ChEBI" id="CHEBI:18420"/>
        <note>shared with alpha subunit</note>
    </ligand>
</feature>
<feature type="binding site" evidence="1">
    <location>
        <position position="328"/>
    </location>
    <ligand>
        <name>Mg(2+)</name>
        <dbReference type="ChEBI" id="CHEBI:18420"/>
        <note>shared with alpha subunit</note>
    </ligand>
</feature>
<feature type="binding site" evidence="1">
    <location>
        <position position="331"/>
    </location>
    <ligand>
        <name>Mg(2+)</name>
        <dbReference type="ChEBI" id="CHEBI:18420"/>
        <note>shared with alpha subunit</note>
    </ligand>
</feature>
<feature type="binding site" evidence="1">
    <location>
        <position position="332"/>
    </location>
    <ligand>
        <name>Mg(2+)</name>
        <dbReference type="ChEBI" id="CHEBI:18420"/>
        <note>shared with alpha subunit</note>
    </ligand>
</feature>